<accession>P60218</accession>
<accession>Q99TZ7</accession>
<dbReference type="EMBL" id="BA000017">
    <property type="protein sequence ID" value="BAB57656.1"/>
    <property type="molecule type" value="Genomic_DNA"/>
</dbReference>
<dbReference type="RefSeq" id="WP_000368656.1">
    <property type="nucleotide sequence ID" value="NC_002758.2"/>
</dbReference>
<dbReference type="SMR" id="P60218"/>
<dbReference type="KEGG" id="sav:SAV1494"/>
<dbReference type="HOGENOM" id="CLU_045647_5_3_9"/>
<dbReference type="PhylomeDB" id="P60218"/>
<dbReference type="Proteomes" id="UP000002481">
    <property type="component" value="Chromosome"/>
</dbReference>
<dbReference type="GO" id="GO:0005737">
    <property type="term" value="C:cytoplasm"/>
    <property type="evidence" value="ECO:0007669"/>
    <property type="project" value="UniProtKB-SubCell"/>
</dbReference>
<dbReference type="GO" id="GO:0051301">
    <property type="term" value="P:cell division"/>
    <property type="evidence" value="ECO:0007669"/>
    <property type="project" value="UniProtKB-KW"/>
</dbReference>
<dbReference type="GO" id="GO:0051304">
    <property type="term" value="P:chromosome separation"/>
    <property type="evidence" value="ECO:0007669"/>
    <property type="project" value="InterPro"/>
</dbReference>
<dbReference type="GO" id="GO:0006260">
    <property type="term" value="P:DNA replication"/>
    <property type="evidence" value="ECO:0007669"/>
    <property type="project" value="UniProtKB-UniRule"/>
</dbReference>
<dbReference type="Gene3D" id="1.10.10.10">
    <property type="entry name" value="Winged helix-like DNA-binding domain superfamily/Winged helix DNA-binding domain"/>
    <property type="match status" value="2"/>
</dbReference>
<dbReference type="HAMAP" id="MF_01804">
    <property type="entry name" value="ScpB"/>
    <property type="match status" value="1"/>
</dbReference>
<dbReference type="InterPro" id="IPR005234">
    <property type="entry name" value="ScpB_csome_segregation"/>
</dbReference>
<dbReference type="InterPro" id="IPR036388">
    <property type="entry name" value="WH-like_DNA-bd_sf"/>
</dbReference>
<dbReference type="InterPro" id="IPR036390">
    <property type="entry name" value="WH_DNA-bd_sf"/>
</dbReference>
<dbReference type="NCBIfam" id="TIGR00281">
    <property type="entry name" value="SMC-Scp complex subunit ScpB"/>
    <property type="match status" value="1"/>
</dbReference>
<dbReference type="PANTHER" id="PTHR34298">
    <property type="entry name" value="SEGREGATION AND CONDENSATION PROTEIN B"/>
    <property type="match status" value="1"/>
</dbReference>
<dbReference type="PANTHER" id="PTHR34298:SF2">
    <property type="entry name" value="SEGREGATION AND CONDENSATION PROTEIN B"/>
    <property type="match status" value="1"/>
</dbReference>
<dbReference type="Pfam" id="PF04079">
    <property type="entry name" value="SMC_ScpB"/>
    <property type="match status" value="1"/>
</dbReference>
<dbReference type="PIRSF" id="PIRSF019345">
    <property type="entry name" value="ScpB"/>
    <property type="match status" value="1"/>
</dbReference>
<dbReference type="SUPFAM" id="SSF46785">
    <property type="entry name" value="Winged helix' DNA-binding domain"/>
    <property type="match status" value="2"/>
</dbReference>
<sequence length="180" mass="20206">MDNHGILESLLFTAGDEGLDEKQLLEILDMSKDQLVELIENYSSHGLMIQRFGTTYVLTTKKEAATYIEQLIEQKSQMKLSQAAMEVLSIIAYNQPLSRSDIELIRSINSDGAVKTLIAKGLVEAKVVNEQRSQQLITTDLFLNVFGISNIEDLPTTEEDDEEMDAFFSNLVNQKGENND</sequence>
<comment type="function">
    <text evidence="1">Participates in chromosomal partition during cell division. May act via the formation of a condensin-like complex containing Smc and ScpA that pull DNA away from mid-cell into both cell halves.</text>
</comment>
<comment type="subunit">
    <text evidence="1">Homodimer. Homodimerization may be required to stabilize the binding of ScpA to the Smc head domains. Component of a cohesin-like complex composed of ScpA, ScpB and the Smc homodimer, in which ScpA and ScpB bind to the head domain of Smc. The presence of the three proteins is required for the association of the complex with DNA.</text>
</comment>
<comment type="subcellular location">
    <subcellularLocation>
        <location evidence="1">Cytoplasm</location>
    </subcellularLocation>
    <text evidence="1">Associated with two foci at the outer edges of the nucleoid region in young cells, and at four foci within both cell halves in older cells.</text>
</comment>
<comment type="similarity">
    <text evidence="1">Belongs to the ScpB family.</text>
</comment>
<organism>
    <name type="scientific">Staphylococcus aureus (strain Mu50 / ATCC 700699)</name>
    <dbReference type="NCBI Taxonomy" id="158878"/>
    <lineage>
        <taxon>Bacteria</taxon>
        <taxon>Bacillati</taxon>
        <taxon>Bacillota</taxon>
        <taxon>Bacilli</taxon>
        <taxon>Bacillales</taxon>
        <taxon>Staphylococcaceae</taxon>
        <taxon>Staphylococcus</taxon>
    </lineage>
</organism>
<proteinExistence type="inferred from homology"/>
<gene>
    <name evidence="1" type="primary">scpB</name>
    <name type="ordered locus">SAV1494</name>
</gene>
<evidence type="ECO:0000255" key="1">
    <source>
        <dbReference type="HAMAP-Rule" id="MF_01804"/>
    </source>
</evidence>
<reference key="1">
    <citation type="journal article" date="2001" name="Lancet">
        <title>Whole genome sequencing of meticillin-resistant Staphylococcus aureus.</title>
        <authorList>
            <person name="Kuroda M."/>
            <person name="Ohta T."/>
            <person name="Uchiyama I."/>
            <person name="Baba T."/>
            <person name="Yuzawa H."/>
            <person name="Kobayashi I."/>
            <person name="Cui L."/>
            <person name="Oguchi A."/>
            <person name="Aoki K."/>
            <person name="Nagai Y."/>
            <person name="Lian J.-Q."/>
            <person name="Ito T."/>
            <person name="Kanamori M."/>
            <person name="Matsumaru H."/>
            <person name="Maruyama A."/>
            <person name="Murakami H."/>
            <person name="Hosoyama A."/>
            <person name="Mizutani-Ui Y."/>
            <person name="Takahashi N.K."/>
            <person name="Sawano T."/>
            <person name="Inoue R."/>
            <person name="Kaito C."/>
            <person name="Sekimizu K."/>
            <person name="Hirakawa H."/>
            <person name="Kuhara S."/>
            <person name="Goto S."/>
            <person name="Yabuzaki J."/>
            <person name="Kanehisa M."/>
            <person name="Yamashita A."/>
            <person name="Oshima K."/>
            <person name="Furuya K."/>
            <person name="Yoshino C."/>
            <person name="Shiba T."/>
            <person name="Hattori M."/>
            <person name="Ogasawara N."/>
            <person name="Hayashi H."/>
            <person name="Hiramatsu K."/>
        </authorList>
    </citation>
    <scope>NUCLEOTIDE SEQUENCE [LARGE SCALE GENOMIC DNA]</scope>
    <source>
        <strain>Mu50 / ATCC 700699</strain>
    </source>
</reference>
<feature type="chain" id="PRO_0000211146" description="Segregation and condensation protein B">
    <location>
        <begin position="1"/>
        <end position="180"/>
    </location>
</feature>
<protein>
    <recommendedName>
        <fullName evidence="1">Segregation and condensation protein B</fullName>
    </recommendedName>
</protein>
<name>SCPB_STAAM</name>
<keyword id="KW-0131">Cell cycle</keyword>
<keyword id="KW-0132">Cell division</keyword>
<keyword id="KW-0159">Chromosome partition</keyword>
<keyword id="KW-0963">Cytoplasm</keyword>